<dbReference type="EMBL" id="AC006223">
    <property type="protein sequence ID" value="AAD15384.1"/>
    <property type="molecule type" value="Genomic_DNA"/>
</dbReference>
<dbReference type="EMBL" id="CP002685">
    <property type="protein sequence ID" value="AEC08650.1"/>
    <property type="molecule type" value="Genomic_DNA"/>
</dbReference>
<dbReference type="EMBL" id="AF325079">
    <property type="protein sequence ID" value="AAK17147.1"/>
    <property type="molecule type" value="mRNA"/>
</dbReference>
<dbReference type="EMBL" id="AY074358">
    <property type="protein sequence ID" value="AAL67054.1"/>
    <property type="molecule type" value="mRNA"/>
</dbReference>
<dbReference type="EMBL" id="AY096443">
    <property type="protein sequence ID" value="AAM20083.1"/>
    <property type="molecule type" value="mRNA"/>
</dbReference>
<dbReference type="EMBL" id="AY087099">
    <property type="protein sequence ID" value="AAM67322.1"/>
    <property type="molecule type" value="mRNA"/>
</dbReference>
<dbReference type="PIR" id="C84730">
    <property type="entry name" value="C84730"/>
</dbReference>
<dbReference type="RefSeq" id="NP_565740.1">
    <property type="nucleotide sequence ID" value="NM_128780.3"/>
</dbReference>
<dbReference type="FunCoup" id="Q9SKX9">
    <property type="interactions" value="1"/>
</dbReference>
<dbReference type="STRING" id="3702.Q9SKX9"/>
<dbReference type="GlyGen" id="Q9SKX9">
    <property type="glycosylation" value="1 site"/>
</dbReference>
<dbReference type="PaxDb" id="3702-AT2G32210.1"/>
<dbReference type="EnsemblPlants" id="AT2G32210.1">
    <property type="protein sequence ID" value="AT2G32210.1"/>
    <property type="gene ID" value="AT2G32210"/>
</dbReference>
<dbReference type="GeneID" id="817780"/>
<dbReference type="Gramene" id="AT2G32210.1">
    <property type="protein sequence ID" value="AT2G32210.1"/>
    <property type="gene ID" value="AT2G32210"/>
</dbReference>
<dbReference type="KEGG" id="ath:AT2G32210"/>
<dbReference type="Araport" id="AT2G32210"/>
<dbReference type="TAIR" id="AT2G32210">
    <property type="gene designation" value="ATHCYSTM6"/>
</dbReference>
<dbReference type="eggNOG" id="ENOG502S924">
    <property type="taxonomic scope" value="Eukaryota"/>
</dbReference>
<dbReference type="HOGENOM" id="CLU_128451_2_2_1"/>
<dbReference type="InParanoid" id="Q9SKX9"/>
<dbReference type="OMA" id="NTSHATM"/>
<dbReference type="OrthoDB" id="785836at2759"/>
<dbReference type="PhylomeDB" id="Q9SKX9"/>
<dbReference type="PRO" id="PR:Q9SKX9"/>
<dbReference type="Proteomes" id="UP000006548">
    <property type="component" value="Chromosome 2"/>
</dbReference>
<dbReference type="ExpressionAtlas" id="Q9SKX9">
    <property type="expression patterns" value="baseline and differential"/>
</dbReference>
<dbReference type="GO" id="GO:0005737">
    <property type="term" value="C:cytoplasm"/>
    <property type="evidence" value="ECO:0000314"/>
    <property type="project" value="UniProtKB"/>
</dbReference>
<dbReference type="GO" id="GO:0005886">
    <property type="term" value="C:plasma membrane"/>
    <property type="evidence" value="ECO:0000314"/>
    <property type="project" value="UniProtKB"/>
</dbReference>
<dbReference type="GO" id="GO:0042802">
    <property type="term" value="F:identical protein binding"/>
    <property type="evidence" value="ECO:0000314"/>
    <property type="project" value="UniProtKB"/>
</dbReference>
<dbReference type="GO" id="GO:0042803">
    <property type="term" value="F:protein homodimerization activity"/>
    <property type="evidence" value="ECO:0000314"/>
    <property type="project" value="UniProtKB"/>
</dbReference>
<dbReference type="GO" id="GO:0071456">
    <property type="term" value="P:cellular response to hypoxia"/>
    <property type="evidence" value="ECO:0007007"/>
    <property type="project" value="TAIR"/>
</dbReference>
<dbReference type="InterPro" id="IPR028144">
    <property type="entry name" value="CYSTM_dom"/>
</dbReference>
<dbReference type="InterPro" id="IPR044850">
    <property type="entry name" value="WIH1-like"/>
</dbReference>
<dbReference type="PANTHER" id="PTHR31568:SF138">
    <property type="entry name" value="PROTEIN CYSTEINE-RICH TRANSMEMBRANE MODULE 4-RELATED"/>
    <property type="match status" value="1"/>
</dbReference>
<dbReference type="PANTHER" id="PTHR31568">
    <property type="entry name" value="RCG49325, ISOFORM CRA_A"/>
    <property type="match status" value="1"/>
</dbReference>
<dbReference type="Pfam" id="PF12734">
    <property type="entry name" value="CYSTM"/>
    <property type="match status" value="1"/>
</dbReference>
<reference key="1">
    <citation type="journal article" date="1999" name="Nature">
        <title>Sequence and analysis of chromosome 2 of the plant Arabidopsis thaliana.</title>
        <authorList>
            <person name="Lin X."/>
            <person name="Kaul S."/>
            <person name="Rounsley S.D."/>
            <person name="Shea T.P."/>
            <person name="Benito M.-I."/>
            <person name="Town C.D."/>
            <person name="Fujii C.Y."/>
            <person name="Mason T.M."/>
            <person name="Bowman C.L."/>
            <person name="Barnstead M.E."/>
            <person name="Feldblyum T.V."/>
            <person name="Buell C.R."/>
            <person name="Ketchum K.A."/>
            <person name="Lee J.J."/>
            <person name="Ronning C.M."/>
            <person name="Koo H.L."/>
            <person name="Moffat K.S."/>
            <person name="Cronin L.A."/>
            <person name="Shen M."/>
            <person name="Pai G."/>
            <person name="Van Aken S."/>
            <person name="Umayam L."/>
            <person name="Tallon L.J."/>
            <person name="Gill J.E."/>
            <person name="Adams M.D."/>
            <person name="Carrera A.J."/>
            <person name="Creasy T.H."/>
            <person name="Goodman H.M."/>
            <person name="Somerville C.R."/>
            <person name="Copenhaver G.P."/>
            <person name="Preuss D."/>
            <person name="Nierman W.C."/>
            <person name="White O."/>
            <person name="Eisen J.A."/>
            <person name="Salzberg S.L."/>
            <person name="Fraser C.M."/>
            <person name="Venter J.C."/>
        </authorList>
    </citation>
    <scope>NUCLEOTIDE SEQUENCE [LARGE SCALE GENOMIC DNA]</scope>
    <source>
        <strain>cv. Columbia</strain>
    </source>
</reference>
<reference key="2">
    <citation type="journal article" date="2017" name="Plant J.">
        <title>Araport11: a complete reannotation of the Arabidopsis thaliana reference genome.</title>
        <authorList>
            <person name="Cheng C.Y."/>
            <person name="Krishnakumar V."/>
            <person name="Chan A.P."/>
            <person name="Thibaud-Nissen F."/>
            <person name="Schobel S."/>
            <person name="Town C.D."/>
        </authorList>
    </citation>
    <scope>GENOME REANNOTATION</scope>
    <source>
        <strain>cv. Columbia</strain>
    </source>
</reference>
<reference key="3">
    <citation type="submission" date="2000-11" db="EMBL/GenBank/DDBJ databases">
        <authorList>
            <person name="Southwick A."/>
            <person name="Karlin-Neumann G."/>
            <person name="Nguyen M."/>
            <person name="Lam B."/>
            <person name="Miranda M."/>
            <person name="Palm C.J."/>
            <person name="Theologis A."/>
            <person name="Ecker J."/>
            <person name="Davis R.W."/>
        </authorList>
    </citation>
    <scope>NUCLEOTIDE SEQUENCE [MRNA]</scope>
    <source>
        <strain>cv. Columbia</strain>
    </source>
</reference>
<reference key="4">
    <citation type="journal article" date="2003" name="Science">
        <title>Empirical analysis of transcriptional activity in the Arabidopsis genome.</title>
        <authorList>
            <person name="Yamada K."/>
            <person name="Lim J."/>
            <person name="Dale J.M."/>
            <person name="Chen H."/>
            <person name="Shinn P."/>
            <person name="Palm C.J."/>
            <person name="Southwick A.M."/>
            <person name="Wu H.C."/>
            <person name="Kim C.J."/>
            <person name="Nguyen M."/>
            <person name="Pham P.K."/>
            <person name="Cheuk R.F."/>
            <person name="Karlin-Newmann G."/>
            <person name="Liu S.X."/>
            <person name="Lam B."/>
            <person name="Sakano H."/>
            <person name="Wu T."/>
            <person name="Yu G."/>
            <person name="Miranda M."/>
            <person name="Quach H.L."/>
            <person name="Tripp M."/>
            <person name="Chang C.H."/>
            <person name="Lee J.M."/>
            <person name="Toriumi M.J."/>
            <person name="Chan M.M."/>
            <person name="Tang C.C."/>
            <person name="Onodera C.S."/>
            <person name="Deng J.M."/>
            <person name="Akiyama K."/>
            <person name="Ansari Y."/>
            <person name="Arakawa T."/>
            <person name="Banh J."/>
            <person name="Banno F."/>
            <person name="Bowser L."/>
            <person name="Brooks S.Y."/>
            <person name="Carninci P."/>
            <person name="Chao Q."/>
            <person name="Choy N."/>
            <person name="Enju A."/>
            <person name="Goldsmith A.D."/>
            <person name="Gurjal M."/>
            <person name="Hansen N.F."/>
            <person name="Hayashizaki Y."/>
            <person name="Johnson-Hopson C."/>
            <person name="Hsuan V.W."/>
            <person name="Iida K."/>
            <person name="Karnes M."/>
            <person name="Khan S."/>
            <person name="Koesema E."/>
            <person name="Ishida J."/>
            <person name="Jiang P.X."/>
            <person name="Jones T."/>
            <person name="Kawai J."/>
            <person name="Kamiya A."/>
            <person name="Meyers C."/>
            <person name="Nakajima M."/>
            <person name="Narusaka M."/>
            <person name="Seki M."/>
            <person name="Sakurai T."/>
            <person name="Satou M."/>
            <person name="Tamse R."/>
            <person name="Vaysberg M."/>
            <person name="Wallender E.K."/>
            <person name="Wong C."/>
            <person name="Yamamura Y."/>
            <person name="Yuan S."/>
            <person name="Shinozaki K."/>
            <person name="Davis R.W."/>
            <person name="Theologis A."/>
            <person name="Ecker J.R."/>
        </authorList>
    </citation>
    <scope>NUCLEOTIDE SEQUENCE [LARGE SCALE MRNA]</scope>
    <source>
        <strain>cv. Columbia</strain>
    </source>
</reference>
<reference key="5">
    <citation type="submission" date="2002-03" db="EMBL/GenBank/DDBJ databases">
        <title>Full-length cDNA from Arabidopsis thaliana.</title>
        <authorList>
            <person name="Brover V.V."/>
            <person name="Troukhan M.E."/>
            <person name="Alexandrov N.A."/>
            <person name="Lu Y.-P."/>
            <person name="Flavell R.B."/>
            <person name="Feldmann K.A."/>
        </authorList>
    </citation>
    <scope>NUCLEOTIDE SEQUENCE [LARGE SCALE MRNA]</scope>
</reference>
<reference key="6">
    <citation type="journal article" date="2018" name="Plant Cell Physiol.">
        <title>CYSTM, a novel non-secreted cysteine-rich peptide family, involved in environmental stresses in Arabidopsis thaliana.</title>
        <authorList>
            <person name="Xu Y."/>
            <person name="Yu Z."/>
            <person name="Zhang D."/>
            <person name="Huang J."/>
            <person name="Wu C."/>
            <person name="Yang G."/>
            <person name="Yan K."/>
            <person name="Zhang S."/>
            <person name="Zheng C."/>
        </authorList>
    </citation>
    <scope>FUNCTION</scope>
    <scope>HOMODIMERIZATION</scope>
    <scope>INTERACTION WITH CYSTM4; CYSTM7; CYSTM11; CYSTM12 AND WIH1/CYSTM13</scope>
    <scope>TISSUE SPECIFICITY</scope>
    <scope>INDUCTION BY HEAT; COLD; DROUGHT; OXIDATION AND SALT</scope>
    <scope>SUBCELLULAR LOCATION</scope>
    <source>
        <strain>cv. Columbia</strain>
    </source>
</reference>
<proteinExistence type="evidence at protein level"/>
<keyword id="KW-1003">Cell membrane</keyword>
<keyword id="KW-0963">Cytoplasm</keyword>
<keyword id="KW-0472">Membrane</keyword>
<keyword id="KW-1185">Reference proteome</keyword>
<keyword id="KW-0812">Transmembrane</keyword>
<keyword id="KW-1133">Transmembrane helix</keyword>
<name>CSTM6_ARATH</name>
<organism>
    <name type="scientific">Arabidopsis thaliana</name>
    <name type="common">Mouse-ear cress</name>
    <dbReference type="NCBI Taxonomy" id="3702"/>
    <lineage>
        <taxon>Eukaryota</taxon>
        <taxon>Viridiplantae</taxon>
        <taxon>Streptophyta</taxon>
        <taxon>Embryophyta</taxon>
        <taxon>Tracheophyta</taxon>
        <taxon>Spermatophyta</taxon>
        <taxon>Magnoliopsida</taxon>
        <taxon>eudicotyledons</taxon>
        <taxon>Gunneridae</taxon>
        <taxon>Pentapetalae</taxon>
        <taxon>rosids</taxon>
        <taxon>malvids</taxon>
        <taxon>Brassicales</taxon>
        <taxon>Brassicaceae</taxon>
        <taxon>Camelineae</taxon>
        <taxon>Arabidopsis</taxon>
    </lineage>
</organism>
<feature type="chain" id="PRO_0000454803" description="Protein CYSTEINE-RICH TRANSMEMBRANE MODULE 6">
    <location>
        <begin position="1"/>
        <end position="71"/>
    </location>
</feature>
<feature type="transmembrane region" description="Helical" evidence="1">
    <location>
        <begin position="48"/>
        <end position="64"/>
    </location>
</feature>
<feature type="region of interest" description="Disordered" evidence="2">
    <location>
        <begin position="1"/>
        <end position="36"/>
    </location>
</feature>
<feature type="compositionally biased region" description="Polar residues" evidence="2">
    <location>
        <begin position="1"/>
        <end position="12"/>
    </location>
</feature>
<feature type="compositionally biased region" description="Pro residues" evidence="2">
    <location>
        <begin position="14"/>
        <end position="30"/>
    </location>
</feature>
<protein>
    <recommendedName>
        <fullName evidence="4">Protein CYSTEINE-RICH TRANSMEMBRANE MODULE 6</fullName>
        <shortName evidence="4">AthCYSTM6</shortName>
    </recommendedName>
</protein>
<evidence type="ECO:0000255" key="1"/>
<evidence type="ECO:0000256" key="2">
    <source>
        <dbReference type="SAM" id="MobiDB-lite"/>
    </source>
</evidence>
<evidence type="ECO:0000269" key="3">
    <source>
    </source>
</evidence>
<evidence type="ECO:0000303" key="4">
    <source>
    </source>
</evidence>
<evidence type="ECO:0000305" key="5"/>
<evidence type="ECO:0000312" key="6">
    <source>
        <dbReference type="Araport" id="AT2G32210"/>
    </source>
</evidence>
<evidence type="ECO:0000312" key="7">
    <source>
        <dbReference type="EMBL" id="AAD15384.1"/>
    </source>
</evidence>
<sequence>MSQYSQNQSSGAYPTPPVSTGPYVAPPPLGYPTNDTSHATVATVETKSKGDGFLKGCLAAMCCCCVLDACF</sequence>
<gene>
    <name evidence="4" type="primary">CYSTM6</name>
    <name evidence="6" type="ordered locus">At2g32210</name>
    <name evidence="7" type="ORF">F22D22.4</name>
</gene>
<comment type="function">
    <text evidence="4">Involved in resistance to abiotic stress.</text>
</comment>
<comment type="subunit">
    <text evidence="3">Homodimer and heterodimers (PubMed:29272523). Interacts with CYSTM7 and WIH1/CYSTM13 (PubMed:29272523).</text>
</comment>
<comment type="subcellular location">
    <subcellularLocation>
        <location evidence="3">Cell membrane</location>
        <topology evidence="1">Single-pass membrane protein</topology>
    </subcellularLocation>
    <subcellularLocation>
        <location evidence="3">Cytoplasm</location>
    </subcellularLocation>
</comment>
<comment type="tissue specificity">
    <text evidence="3">Mostly expressed in roots, stems, rosette leaves and siliques and, to a lower extent, in flowers and cauline leaves.</text>
</comment>
<comment type="induction">
    <text evidence="3">Induced by heat in roots, but suppressed in shoots (PubMed:29272523). Accumulates in response to cold, drought, oxidation stress and salt (PubMed:29272523).</text>
</comment>
<comment type="similarity">
    <text evidence="5">Belongs to the CYSTM1 family.</text>
</comment>
<accession>Q9SKX9</accession>